<sequence>MPKFKTHTGAGKRFRVTGTGKLMRRRANRNHLLEHKPSRRTRRLWNEVPVAAADTARMRRLLGR</sequence>
<name>RL35_ACIC1</name>
<accession>A0LUD0</accession>
<gene>
    <name evidence="1" type="primary">rpmI</name>
    <name type="ordered locus">Acel_1268</name>
</gene>
<feature type="chain" id="PRO_1000050646" description="Large ribosomal subunit protein bL35">
    <location>
        <begin position="1"/>
        <end position="64"/>
    </location>
</feature>
<comment type="similarity">
    <text evidence="1">Belongs to the bacterial ribosomal protein bL35 family.</text>
</comment>
<evidence type="ECO:0000255" key="1">
    <source>
        <dbReference type="HAMAP-Rule" id="MF_00514"/>
    </source>
</evidence>
<evidence type="ECO:0000305" key="2"/>
<dbReference type="EMBL" id="CP000481">
    <property type="protein sequence ID" value="ABK53040.1"/>
    <property type="molecule type" value="Genomic_DNA"/>
</dbReference>
<dbReference type="RefSeq" id="WP_011720103.1">
    <property type="nucleotide sequence ID" value="NC_008578.1"/>
</dbReference>
<dbReference type="SMR" id="A0LUD0"/>
<dbReference type="FunCoup" id="A0LUD0">
    <property type="interactions" value="93"/>
</dbReference>
<dbReference type="STRING" id="351607.Acel_1268"/>
<dbReference type="KEGG" id="ace:Acel_1268"/>
<dbReference type="eggNOG" id="COG0291">
    <property type="taxonomic scope" value="Bacteria"/>
</dbReference>
<dbReference type="HOGENOM" id="CLU_169643_4_2_11"/>
<dbReference type="InParanoid" id="A0LUD0"/>
<dbReference type="OrthoDB" id="9804851at2"/>
<dbReference type="Proteomes" id="UP000008221">
    <property type="component" value="Chromosome"/>
</dbReference>
<dbReference type="GO" id="GO:0022625">
    <property type="term" value="C:cytosolic large ribosomal subunit"/>
    <property type="evidence" value="ECO:0007669"/>
    <property type="project" value="TreeGrafter"/>
</dbReference>
<dbReference type="GO" id="GO:0003735">
    <property type="term" value="F:structural constituent of ribosome"/>
    <property type="evidence" value="ECO:0007669"/>
    <property type="project" value="InterPro"/>
</dbReference>
<dbReference type="GO" id="GO:0006412">
    <property type="term" value="P:translation"/>
    <property type="evidence" value="ECO:0007669"/>
    <property type="project" value="UniProtKB-UniRule"/>
</dbReference>
<dbReference type="FunFam" id="4.10.410.60:FF:000001">
    <property type="entry name" value="50S ribosomal protein L35"/>
    <property type="match status" value="1"/>
</dbReference>
<dbReference type="Gene3D" id="4.10.410.60">
    <property type="match status" value="1"/>
</dbReference>
<dbReference type="HAMAP" id="MF_00514">
    <property type="entry name" value="Ribosomal_bL35"/>
    <property type="match status" value="1"/>
</dbReference>
<dbReference type="InterPro" id="IPR001706">
    <property type="entry name" value="Ribosomal_bL35"/>
</dbReference>
<dbReference type="InterPro" id="IPR021137">
    <property type="entry name" value="Ribosomal_bL35-like"/>
</dbReference>
<dbReference type="InterPro" id="IPR018265">
    <property type="entry name" value="Ribosomal_bL35_CS"/>
</dbReference>
<dbReference type="InterPro" id="IPR037229">
    <property type="entry name" value="Ribosomal_bL35_sf"/>
</dbReference>
<dbReference type="NCBIfam" id="TIGR00001">
    <property type="entry name" value="rpmI_bact"/>
    <property type="match status" value="1"/>
</dbReference>
<dbReference type="PANTHER" id="PTHR33343">
    <property type="entry name" value="54S RIBOSOMAL PROTEIN BL35M"/>
    <property type="match status" value="1"/>
</dbReference>
<dbReference type="PANTHER" id="PTHR33343:SF1">
    <property type="entry name" value="LARGE RIBOSOMAL SUBUNIT PROTEIN BL35M"/>
    <property type="match status" value="1"/>
</dbReference>
<dbReference type="Pfam" id="PF01632">
    <property type="entry name" value="Ribosomal_L35p"/>
    <property type="match status" value="1"/>
</dbReference>
<dbReference type="PRINTS" id="PR00064">
    <property type="entry name" value="RIBOSOMALL35"/>
</dbReference>
<dbReference type="SUPFAM" id="SSF143034">
    <property type="entry name" value="L35p-like"/>
    <property type="match status" value="1"/>
</dbReference>
<dbReference type="PROSITE" id="PS00936">
    <property type="entry name" value="RIBOSOMAL_L35"/>
    <property type="match status" value="1"/>
</dbReference>
<keyword id="KW-1185">Reference proteome</keyword>
<keyword id="KW-0687">Ribonucleoprotein</keyword>
<keyword id="KW-0689">Ribosomal protein</keyword>
<proteinExistence type="inferred from homology"/>
<reference key="1">
    <citation type="journal article" date="2009" name="Genome Res.">
        <title>Complete genome of the cellulolytic thermophile Acidothermus cellulolyticus 11B provides insights into its ecophysiological and evolutionary adaptations.</title>
        <authorList>
            <person name="Barabote R.D."/>
            <person name="Xie G."/>
            <person name="Leu D.H."/>
            <person name="Normand P."/>
            <person name="Necsulea A."/>
            <person name="Daubin V."/>
            <person name="Medigue C."/>
            <person name="Adney W.S."/>
            <person name="Xu X.C."/>
            <person name="Lapidus A."/>
            <person name="Parales R.E."/>
            <person name="Detter C."/>
            <person name="Pujic P."/>
            <person name="Bruce D."/>
            <person name="Lavire C."/>
            <person name="Challacombe J.F."/>
            <person name="Brettin T.S."/>
            <person name="Berry A.M."/>
        </authorList>
    </citation>
    <scope>NUCLEOTIDE SEQUENCE [LARGE SCALE GENOMIC DNA]</scope>
    <source>
        <strain>ATCC 43068 / DSM 8971 / 11B</strain>
    </source>
</reference>
<organism>
    <name type="scientific">Acidothermus cellulolyticus (strain ATCC 43068 / DSM 8971 / 11B)</name>
    <dbReference type="NCBI Taxonomy" id="351607"/>
    <lineage>
        <taxon>Bacteria</taxon>
        <taxon>Bacillati</taxon>
        <taxon>Actinomycetota</taxon>
        <taxon>Actinomycetes</taxon>
        <taxon>Acidothermales</taxon>
        <taxon>Acidothermaceae</taxon>
        <taxon>Acidothermus</taxon>
    </lineage>
</organism>
<protein>
    <recommendedName>
        <fullName evidence="1">Large ribosomal subunit protein bL35</fullName>
    </recommendedName>
    <alternativeName>
        <fullName evidence="2">50S ribosomal protein L35</fullName>
    </alternativeName>
</protein>